<feature type="chain" id="PRO_1000212967" description="UPF0335 protein RPR_04100">
    <location>
        <begin position="1"/>
        <end position="78"/>
    </location>
</feature>
<dbReference type="EMBL" id="CP001227">
    <property type="protein sequence ID" value="ACR47517.1"/>
    <property type="molecule type" value="Genomic_DNA"/>
</dbReference>
<dbReference type="RefSeq" id="WP_004996682.1">
    <property type="nucleotide sequence ID" value="NC_012730.1"/>
</dbReference>
<dbReference type="SMR" id="C4K1R7"/>
<dbReference type="KEGG" id="rpk:RPR_04100"/>
<dbReference type="HOGENOM" id="CLU_158651_4_0_5"/>
<dbReference type="Proteomes" id="UP000005015">
    <property type="component" value="Chromosome"/>
</dbReference>
<dbReference type="GO" id="GO:0003677">
    <property type="term" value="F:DNA binding"/>
    <property type="evidence" value="ECO:0007669"/>
    <property type="project" value="InterPro"/>
</dbReference>
<dbReference type="HAMAP" id="MF_00797">
    <property type="entry name" value="UPF0335"/>
    <property type="match status" value="1"/>
</dbReference>
<dbReference type="InterPro" id="IPR018753">
    <property type="entry name" value="GapR-like"/>
</dbReference>
<dbReference type="InterPro" id="IPR046367">
    <property type="entry name" value="GapR-like_DNA-bd"/>
</dbReference>
<dbReference type="NCBIfam" id="NF010247">
    <property type="entry name" value="PRK13694.1"/>
    <property type="match status" value="1"/>
</dbReference>
<dbReference type="Pfam" id="PF10073">
    <property type="entry name" value="GapR_DNA-bd"/>
    <property type="match status" value="1"/>
</dbReference>
<name>Y4100_RICPU</name>
<proteinExistence type="inferred from homology"/>
<gene>
    <name type="ordered locus">RPR_04100</name>
</gene>
<protein>
    <recommendedName>
        <fullName evidence="1">UPF0335 protein RPR_04100</fullName>
    </recommendedName>
</protein>
<evidence type="ECO:0000255" key="1">
    <source>
        <dbReference type="HAMAP-Rule" id="MF_00797"/>
    </source>
</evidence>
<comment type="similarity">
    <text evidence="1">Belongs to the UPF0335 family.</text>
</comment>
<reference key="1">
    <citation type="journal article" date="2009" name="PLoS ONE">
        <title>Genome sequence of the endosymbiont Rickettsia peacockii and comparison with virulent Rickettsia rickettsii: identification of virulence factors.</title>
        <authorList>
            <person name="Felsheim R.F."/>
            <person name="Kurtti T.J."/>
            <person name="Munderloh U.G."/>
        </authorList>
    </citation>
    <scope>NUCLEOTIDE SEQUENCE [LARGE SCALE GENOMIC DNA]</scope>
    <source>
        <strain>Rustic</strain>
    </source>
</reference>
<accession>C4K1R7</accession>
<organism>
    <name type="scientific">Rickettsia peacockii (strain Rustic)</name>
    <dbReference type="NCBI Taxonomy" id="562019"/>
    <lineage>
        <taxon>Bacteria</taxon>
        <taxon>Pseudomonadati</taxon>
        <taxon>Pseudomonadota</taxon>
        <taxon>Alphaproteobacteria</taxon>
        <taxon>Rickettsiales</taxon>
        <taxon>Rickettsiaceae</taxon>
        <taxon>Rickettsieae</taxon>
        <taxon>Rickettsia</taxon>
        <taxon>spotted fever group</taxon>
    </lineage>
</organism>
<sequence length="78" mass="9029">MSEVVVKEQLEQYISKIERLEQEKADLSQEVKDIFQDASSHGFDVKAMKSILKLKKLDKDKLAEQDAMLELYRDTLGI</sequence>